<reference key="1">
    <citation type="journal article" date="2004" name="Proc. Natl. Acad. Sci. U.S.A.">
        <title>Complete genomes of two clinical Staphylococcus aureus strains: evidence for the rapid evolution of virulence and drug resistance.</title>
        <authorList>
            <person name="Holden M.T.G."/>
            <person name="Feil E.J."/>
            <person name="Lindsay J.A."/>
            <person name="Peacock S.J."/>
            <person name="Day N.P.J."/>
            <person name="Enright M.C."/>
            <person name="Foster T.J."/>
            <person name="Moore C.E."/>
            <person name="Hurst L."/>
            <person name="Atkin R."/>
            <person name="Barron A."/>
            <person name="Bason N."/>
            <person name="Bentley S.D."/>
            <person name="Chillingworth C."/>
            <person name="Chillingworth T."/>
            <person name="Churcher C."/>
            <person name="Clark L."/>
            <person name="Corton C."/>
            <person name="Cronin A."/>
            <person name="Doggett J."/>
            <person name="Dowd L."/>
            <person name="Feltwell T."/>
            <person name="Hance Z."/>
            <person name="Harris B."/>
            <person name="Hauser H."/>
            <person name="Holroyd S."/>
            <person name="Jagels K."/>
            <person name="James K.D."/>
            <person name="Lennard N."/>
            <person name="Line A."/>
            <person name="Mayes R."/>
            <person name="Moule S."/>
            <person name="Mungall K."/>
            <person name="Ormond D."/>
            <person name="Quail M.A."/>
            <person name="Rabbinowitsch E."/>
            <person name="Rutherford K.M."/>
            <person name="Sanders M."/>
            <person name="Sharp S."/>
            <person name="Simmonds M."/>
            <person name="Stevens K."/>
            <person name="Whitehead S."/>
            <person name="Barrell B.G."/>
            <person name="Spratt B.G."/>
            <person name="Parkhill J."/>
        </authorList>
    </citation>
    <scope>NUCLEOTIDE SEQUENCE [LARGE SCALE GENOMIC DNA]</scope>
    <source>
        <strain>MSSA476</strain>
    </source>
</reference>
<protein>
    <recommendedName>
        <fullName>Putative glycosyltransferase TagX</fullName>
        <ecNumber>2.4.-.-</ecNumber>
    </recommendedName>
    <alternativeName>
        <fullName>Teichoic acid biosynthesis protein X</fullName>
    </alternativeName>
</protein>
<name>TAGX_STAAS</name>
<accession>Q6GBJ0</accession>
<sequence>MRLTIIIPTCNNEATIRQLLISIESKEHYRILCIDGGSTDQTIPMIERLPRELKHISLIQLQNASIATCINKGLMDIKMTDPHDSDAFMVINPTSIVLPGKLDRLTAAFKNNDNIDMVIGQRAYNYHGEWKLKSADEFIKDNRIVTLTEQPDLLSMMSFDGKLFSAKFAELQCDETLANTYNHTILVKAMQKATDIHLVSQMIVGDNDIDTHATSNDEDFNRYITEIMKIRQRVMEMLLLPEQRLLYSDMVDRILFNNSLKYYMNEHPAVTHTTIQLVKDYIMSMQHSDYVSQNMFDIINTVEFIGENWDREIYELWRQTLIQVGINRPTYKKFLIQLKGRKFAHRTKSMLKR</sequence>
<comment type="similarity">
    <text evidence="1">Belongs to the glycosyltransferase 2 family.</text>
</comment>
<keyword id="KW-0133">Cell shape</keyword>
<keyword id="KW-0961">Cell wall biogenesis/degradation</keyword>
<keyword id="KW-0328">Glycosyltransferase</keyword>
<keyword id="KW-0777">Teichoic acid biosynthesis</keyword>
<keyword id="KW-0808">Transferase</keyword>
<dbReference type="EC" id="2.4.-.-"/>
<dbReference type="EMBL" id="BX571857">
    <property type="protein sequence ID" value="CAG42381.1"/>
    <property type="molecule type" value="Genomic_DNA"/>
</dbReference>
<dbReference type="RefSeq" id="WP_001241175.1">
    <property type="nucleotide sequence ID" value="NC_002953.3"/>
</dbReference>
<dbReference type="SMR" id="Q6GBJ0"/>
<dbReference type="CAZy" id="GT2">
    <property type="family name" value="Glycosyltransferase Family 2"/>
</dbReference>
<dbReference type="KEGG" id="sas:SAS0606"/>
<dbReference type="HOGENOM" id="CLU_067098_0_0_9"/>
<dbReference type="GO" id="GO:0016757">
    <property type="term" value="F:glycosyltransferase activity"/>
    <property type="evidence" value="ECO:0007669"/>
    <property type="project" value="UniProtKB-KW"/>
</dbReference>
<dbReference type="GO" id="GO:0071555">
    <property type="term" value="P:cell wall organization"/>
    <property type="evidence" value="ECO:0007669"/>
    <property type="project" value="UniProtKB-KW"/>
</dbReference>
<dbReference type="GO" id="GO:0008360">
    <property type="term" value="P:regulation of cell shape"/>
    <property type="evidence" value="ECO:0007669"/>
    <property type="project" value="UniProtKB-KW"/>
</dbReference>
<dbReference type="GO" id="GO:0019350">
    <property type="term" value="P:teichoic acid biosynthetic process"/>
    <property type="evidence" value="ECO:0007669"/>
    <property type="project" value="UniProtKB-KW"/>
</dbReference>
<dbReference type="CDD" id="cd00761">
    <property type="entry name" value="Glyco_tranf_GTA_type"/>
    <property type="match status" value="1"/>
</dbReference>
<dbReference type="Gene3D" id="3.90.550.10">
    <property type="entry name" value="Spore Coat Polysaccharide Biosynthesis Protein SpsA, Chain A"/>
    <property type="match status" value="1"/>
</dbReference>
<dbReference type="InterPro" id="IPR001173">
    <property type="entry name" value="Glyco_trans_2-like"/>
</dbReference>
<dbReference type="InterPro" id="IPR050834">
    <property type="entry name" value="Glycosyltransf_2"/>
</dbReference>
<dbReference type="InterPro" id="IPR029044">
    <property type="entry name" value="Nucleotide-diphossugar_trans"/>
</dbReference>
<dbReference type="PANTHER" id="PTHR43685">
    <property type="entry name" value="GLYCOSYLTRANSFERASE"/>
    <property type="match status" value="1"/>
</dbReference>
<dbReference type="PANTHER" id="PTHR43685:SF11">
    <property type="entry name" value="GLYCOSYLTRANSFERASE TAGX-RELATED"/>
    <property type="match status" value="1"/>
</dbReference>
<dbReference type="Pfam" id="PF00535">
    <property type="entry name" value="Glycos_transf_2"/>
    <property type="match status" value="1"/>
</dbReference>
<dbReference type="SUPFAM" id="SSF53448">
    <property type="entry name" value="Nucleotide-diphospho-sugar transferases"/>
    <property type="match status" value="1"/>
</dbReference>
<organism>
    <name type="scientific">Staphylococcus aureus (strain MSSA476)</name>
    <dbReference type="NCBI Taxonomy" id="282459"/>
    <lineage>
        <taxon>Bacteria</taxon>
        <taxon>Bacillati</taxon>
        <taxon>Bacillota</taxon>
        <taxon>Bacilli</taxon>
        <taxon>Bacillales</taxon>
        <taxon>Staphylococcaceae</taxon>
        <taxon>Staphylococcus</taxon>
    </lineage>
</organism>
<feature type="chain" id="PRO_0000059227" description="Putative glycosyltransferase TagX">
    <location>
        <begin position="1"/>
        <end position="353"/>
    </location>
</feature>
<gene>
    <name type="primary">tagX</name>
    <name type="ordered locus">SAS0606</name>
</gene>
<evidence type="ECO:0000305" key="1"/>
<proteinExistence type="inferred from homology"/>